<organism>
    <name type="scientific">Paracidovorax citrulli (strain AAC00-1)</name>
    <name type="common">Acidovorax citrulli</name>
    <dbReference type="NCBI Taxonomy" id="397945"/>
    <lineage>
        <taxon>Bacteria</taxon>
        <taxon>Pseudomonadati</taxon>
        <taxon>Pseudomonadota</taxon>
        <taxon>Betaproteobacteria</taxon>
        <taxon>Burkholderiales</taxon>
        <taxon>Comamonadaceae</taxon>
        <taxon>Paracidovorax</taxon>
    </lineage>
</organism>
<feature type="chain" id="PRO_1000001710" description="Phosphate acyltransferase">
    <location>
        <begin position="1"/>
        <end position="344"/>
    </location>
</feature>
<proteinExistence type="inferred from homology"/>
<keyword id="KW-0963">Cytoplasm</keyword>
<keyword id="KW-0444">Lipid biosynthesis</keyword>
<keyword id="KW-0443">Lipid metabolism</keyword>
<keyword id="KW-0594">Phospholipid biosynthesis</keyword>
<keyword id="KW-1208">Phospholipid metabolism</keyword>
<keyword id="KW-0808">Transferase</keyword>
<reference key="1">
    <citation type="submission" date="2006-12" db="EMBL/GenBank/DDBJ databases">
        <title>Complete sequence of Acidovorax avenae subsp. citrulli AAC00-1.</title>
        <authorList>
            <person name="Copeland A."/>
            <person name="Lucas S."/>
            <person name="Lapidus A."/>
            <person name="Barry K."/>
            <person name="Detter J.C."/>
            <person name="Glavina del Rio T."/>
            <person name="Dalin E."/>
            <person name="Tice H."/>
            <person name="Pitluck S."/>
            <person name="Kiss H."/>
            <person name="Brettin T."/>
            <person name="Bruce D."/>
            <person name="Han C."/>
            <person name="Tapia R."/>
            <person name="Gilna P."/>
            <person name="Schmutz J."/>
            <person name="Larimer F."/>
            <person name="Land M."/>
            <person name="Hauser L."/>
            <person name="Kyrpides N."/>
            <person name="Kim E."/>
            <person name="Stahl D."/>
            <person name="Richardson P."/>
        </authorList>
    </citation>
    <scope>NUCLEOTIDE SEQUENCE [LARGE SCALE GENOMIC DNA]</scope>
    <source>
        <strain>AAC00-1</strain>
    </source>
</reference>
<name>PLSX_PARC0</name>
<gene>
    <name evidence="1" type="primary">plsX</name>
    <name type="ordered locus">Aave_1182</name>
</gene>
<accession>A1TLD6</accession>
<comment type="function">
    <text evidence="1">Catalyzes the reversible formation of acyl-phosphate (acyl-PO(4)) from acyl-[acyl-carrier-protein] (acyl-ACP). This enzyme utilizes acyl-ACP as fatty acyl donor, but not acyl-CoA.</text>
</comment>
<comment type="catalytic activity">
    <reaction evidence="1">
        <text>a fatty acyl-[ACP] + phosphate = an acyl phosphate + holo-[ACP]</text>
        <dbReference type="Rhea" id="RHEA:42292"/>
        <dbReference type="Rhea" id="RHEA-COMP:9685"/>
        <dbReference type="Rhea" id="RHEA-COMP:14125"/>
        <dbReference type="ChEBI" id="CHEBI:43474"/>
        <dbReference type="ChEBI" id="CHEBI:59918"/>
        <dbReference type="ChEBI" id="CHEBI:64479"/>
        <dbReference type="ChEBI" id="CHEBI:138651"/>
        <dbReference type="EC" id="2.3.1.274"/>
    </reaction>
</comment>
<comment type="pathway">
    <text evidence="1">Lipid metabolism; phospholipid metabolism.</text>
</comment>
<comment type="subunit">
    <text evidence="1">Homodimer. Probably interacts with PlsY.</text>
</comment>
<comment type="subcellular location">
    <subcellularLocation>
        <location evidence="1">Cytoplasm</location>
    </subcellularLocation>
    <text evidence="1">Associated with the membrane possibly through PlsY.</text>
</comment>
<comment type="similarity">
    <text evidence="1">Belongs to the PlsX family.</text>
</comment>
<sequence length="344" mass="36375">MITLAVDCMGGDHGPRVTLAACRQFLEHHPQARLLLVGQPESLGGFAHERAQIVPASEVVSMDDPVEVALRRKKDSSMRVAVQQVKDGAAQVAVSAGNTGALMAIARYLLKTLDGIDRPAIATQMPNARGGATTVLDLGANVDCSAEHLLQFAVMGAALVSALHEGTEEPAVGLLNIGEEVIKGNEVIKRTGELLRSAAESGDLNFYGNVEGNDIFKGTVDIVVCDGFVGNVALKASEGVASMIVGALKQEFKRSIFTKIAAVVAYPVLSALMRRMDHRRYNGAALLGLRGLVFKSHGSADILAFEQALIRAYDTARNNLLDRVRSRVAHAAPLLGPAAAQPSP</sequence>
<evidence type="ECO:0000255" key="1">
    <source>
        <dbReference type="HAMAP-Rule" id="MF_00019"/>
    </source>
</evidence>
<protein>
    <recommendedName>
        <fullName evidence="1">Phosphate acyltransferase</fullName>
        <ecNumber evidence="1">2.3.1.274</ecNumber>
    </recommendedName>
    <alternativeName>
        <fullName evidence="1">Acyl-ACP phosphotransacylase</fullName>
    </alternativeName>
    <alternativeName>
        <fullName evidence="1">Acyl-[acyl-carrier-protein]--phosphate acyltransferase</fullName>
    </alternativeName>
    <alternativeName>
        <fullName evidence="1">Phosphate-acyl-ACP acyltransferase</fullName>
    </alternativeName>
</protein>
<dbReference type="EC" id="2.3.1.274" evidence="1"/>
<dbReference type="EMBL" id="CP000512">
    <property type="protein sequence ID" value="ABM31774.1"/>
    <property type="molecule type" value="Genomic_DNA"/>
</dbReference>
<dbReference type="RefSeq" id="WP_011794327.1">
    <property type="nucleotide sequence ID" value="NC_008752.1"/>
</dbReference>
<dbReference type="SMR" id="A1TLD6"/>
<dbReference type="STRING" id="397945.Aave_1182"/>
<dbReference type="GeneID" id="79790842"/>
<dbReference type="KEGG" id="aav:Aave_1182"/>
<dbReference type="eggNOG" id="COG0416">
    <property type="taxonomic scope" value="Bacteria"/>
</dbReference>
<dbReference type="HOGENOM" id="CLU_039379_1_0_4"/>
<dbReference type="OrthoDB" id="9806408at2"/>
<dbReference type="UniPathway" id="UPA00085"/>
<dbReference type="Proteomes" id="UP000002596">
    <property type="component" value="Chromosome"/>
</dbReference>
<dbReference type="GO" id="GO:0005737">
    <property type="term" value="C:cytoplasm"/>
    <property type="evidence" value="ECO:0007669"/>
    <property type="project" value="UniProtKB-SubCell"/>
</dbReference>
<dbReference type="GO" id="GO:0043811">
    <property type="term" value="F:phosphate:acyl-[acyl carrier protein] acyltransferase activity"/>
    <property type="evidence" value="ECO:0007669"/>
    <property type="project" value="UniProtKB-UniRule"/>
</dbReference>
<dbReference type="GO" id="GO:0006633">
    <property type="term" value="P:fatty acid biosynthetic process"/>
    <property type="evidence" value="ECO:0007669"/>
    <property type="project" value="UniProtKB-UniRule"/>
</dbReference>
<dbReference type="GO" id="GO:0008654">
    <property type="term" value="P:phospholipid biosynthetic process"/>
    <property type="evidence" value="ECO:0007669"/>
    <property type="project" value="UniProtKB-KW"/>
</dbReference>
<dbReference type="Gene3D" id="3.40.718.10">
    <property type="entry name" value="Isopropylmalate Dehydrogenase"/>
    <property type="match status" value="1"/>
</dbReference>
<dbReference type="HAMAP" id="MF_00019">
    <property type="entry name" value="PlsX"/>
    <property type="match status" value="1"/>
</dbReference>
<dbReference type="InterPro" id="IPR003664">
    <property type="entry name" value="FA_synthesis"/>
</dbReference>
<dbReference type="InterPro" id="IPR012281">
    <property type="entry name" value="Phospholipid_synth_PlsX-like"/>
</dbReference>
<dbReference type="NCBIfam" id="TIGR00182">
    <property type="entry name" value="plsX"/>
    <property type="match status" value="1"/>
</dbReference>
<dbReference type="PANTHER" id="PTHR30100">
    <property type="entry name" value="FATTY ACID/PHOSPHOLIPID SYNTHESIS PROTEIN PLSX"/>
    <property type="match status" value="1"/>
</dbReference>
<dbReference type="PANTHER" id="PTHR30100:SF1">
    <property type="entry name" value="PHOSPHATE ACYLTRANSFERASE"/>
    <property type="match status" value="1"/>
</dbReference>
<dbReference type="Pfam" id="PF02504">
    <property type="entry name" value="FA_synthesis"/>
    <property type="match status" value="1"/>
</dbReference>
<dbReference type="PIRSF" id="PIRSF002465">
    <property type="entry name" value="Phsphlp_syn_PlsX"/>
    <property type="match status" value="1"/>
</dbReference>
<dbReference type="SUPFAM" id="SSF53659">
    <property type="entry name" value="Isocitrate/Isopropylmalate dehydrogenase-like"/>
    <property type="match status" value="1"/>
</dbReference>